<gene>
    <name evidence="1" type="primary">mnmC</name>
    <name type="ordered locus">Rmet_1887</name>
</gene>
<sequence length="672" mass="71705">MTRVLEPAEPILSNDGTPYSPRYDDVYHSARGGLAQAHHVFLGGNGLPEGWAGREQFVIVETGFGQGLNFLATWQAWRSDPQRCRRLHFVSIEKHPFTREGLARLHAHAGLGDLLPLSDQLQQQWPDALPGLHRLSFEDGAVTLTLALGDVETMLPKLVLGADAFYLDGFSPSRNAEMWSDTVFRGLARLARIGATLATYTAAGFVRRGLTAAGFEAHKAPGFGGKRDMTVARFAPVWKNRRHAPPEAAQWAERHAIVIGAGLAGCAVTERLAARGWRVTLLDAHDGPARQTSCHRAAAMHAHVSADDSFLSRLSRAGNLHALRAWGALEAAGYPVGWHGTGVLQIGEDDAENAAQQAALAELRFPESFVRWMSPQEATEQHGATVPRGGLWFPKGGWVAPPDICRAQLAKAGAAVDALFNCRVAAIRRIGDAWQALADDGGVLAAAPVLVLANAYEADRLTSGQFLALRRVRGQLTDLAPAQAEALGGWPDCVVTGGGYLLPRDAAGGARMGSSYEADEGPLVERPEVHAANLDRLASMLPDRASQIAQIDPATLQGYVGVRTVTYNRLPLVGRIADDAQALSRAAALRGAHLRDLPRLPGLYAALAYASRGLTWAALCAELIASQIEGEPLPLEADLADAIDPARLLLRALRHGHAQAPESAGPGVDAAG</sequence>
<name>MNMC_CUPMC</name>
<dbReference type="EC" id="2.1.1.61" evidence="1"/>
<dbReference type="EC" id="1.5.-.-" evidence="1"/>
<dbReference type="EMBL" id="CP000352">
    <property type="protein sequence ID" value="ABF08766.1"/>
    <property type="molecule type" value="Genomic_DNA"/>
</dbReference>
<dbReference type="RefSeq" id="WP_011516612.1">
    <property type="nucleotide sequence ID" value="NC_007973.1"/>
</dbReference>
<dbReference type="SMR" id="Q1LM60"/>
<dbReference type="STRING" id="266264.Rmet_1887"/>
<dbReference type="KEGG" id="rme:Rmet_1887"/>
<dbReference type="eggNOG" id="COG0665">
    <property type="taxonomic scope" value="Bacteria"/>
</dbReference>
<dbReference type="eggNOG" id="COG4121">
    <property type="taxonomic scope" value="Bacteria"/>
</dbReference>
<dbReference type="HOGENOM" id="CLU_022427_1_0_4"/>
<dbReference type="Proteomes" id="UP000002429">
    <property type="component" value="Chromosome"/>
</dbReference>
<dbReference type="GO" id="GO:0005737">
    <property type="term" value="C:cytoplasm"/>
    <property type="evidence" value="ECO:0007669"/>
    <property type="project" value="UniProtKB-SubCell"/>
</dbReference>
<dbReference type="GO" id="GO:0050660">
    <property type="term" value="F:flavin adenine dinucleotide binding"/>
    <property type="evidence" value="ECO:0007669"/>
    <property type="project" value="UniProtKB-UniRule"/>
</dbReference>
<dbReference type="GO" id="GO:0016645">
    <property type="term" value="F:oxidoreductase activity, acting on the CH-NH group of donors"/>
    <property type="evidence" value="ECO:0007669"/>
    <property type="project" value="InterPro"/>
</dbReference>
<dbReference type="GO" id="GO:0004808">
    <property type="term" value="F:tRNA (5-methylaminomethyl-2-thiouridylate)(34)-methyltransferase activity"/>
    <property type="evidence" value="ECO:0007669"/>
    <property type="project" value="UniProtKB-EC"/>
</dbReference>
<dbReference type="GO" id="GO:0032259">
    <property type="term" value="P:methylation"/>
    <property type="evidence" value="ECO:0007669"/>
    <property type="project" value="UniProtKB-KW"/>
</dbReference>
<dbReference type="GO" id="GO:0002097">
    <property type="term" value="P:tRNA wobble base modification"/>
    <property type="evidence" value="ECO:0007669"/>
    <property type="project" value="UniProtKB-UniRule"/>
</dbReference>
<dbReference type="Gene3D" id="3.30.9.10">
    <property type="entry name" value="D-Amino Acid Oxidase, subunit A, domain 2"/>
    <property type="match status" value="1"/>
</dbReference>
<dbReference type="Gene3D" id="3.50.50.60">
    <property type="entry name" value="FAD/NAD(P)-binding domain"/>
    <property type="match status" value="1"/>
</dbReference>
<dbReference type="Gene3D" id="3.40.50.150">
    <property type="entry name" value="Vaccinia Virus protein VP39"/>
    <property type="match status" value="1"/>
</dbReference>
<dbReference type="HAMAP" id="MF_01102">
    <property type="entry name" value="MnmC"/>
    <property type="match status" value="1"/>
</dbReference>
<dbReference type="InterPro" id="IPR006076">
    <property type="entry name" value="FAD-dep_OxRdtase"/>
</dbReference>
<dbReference type="InterPro" id="IPR036188">
    <property type="entry name" value="FAD/NAD-bd_sf"/>
</dbReference>
<dbReference type="InterPro" id="IPR008471">
    <property type="entry name" value="MnmC-like_methylTransf"/>
</dbReference>
<dbReference type="InterPro" id="IPR029063">
    <property type="entry name" value="SAM-dependent_MTases_sf"/>
</dbReference>
<dbReference type="InterPro" id="IPR023032">
    <property type="entry name" value="tRNA_MAMT_biosynth_bifunc_MnmC"/>
</dbReference>
<dbReference type="InterPro" id="IPR047785">
    <property type="entry name" value="tRNA_MNMC2"/>
</dbReference>
<dbReference type="InterPro" id="IPR017610">
    <property type="entry name" value="tRNA_S-uridine_synth_MnmC_C"/>
</dbReference>
<dbReference type="NCBIfam" id="TIGR03197">
    <property type="entry name" value="MnmC_Cterm"/>
    <property type="match status" value="1"/>
</dbReference>
<dbReference type="NCBIfam" id="NF002481">
    <property type="entry name" value="PRK01747.1-2"/>
    <property type="match status" value="1"/>
</dbReference>
<dbReference type="NCBIfam" id="NF002483">
    <property type="entry name" value="PRK01747.1-4"/>
    <property type="match status" value="1"/>
</dbReference>
<dbReference type="NCBIfam" id="NF033855">
    <property type="entry name" value="tRNA_MNMC2"/>
    <property type="match status" value="1"/>
</dbReference>
<dbReference type="PANTHER" id="PTHR13847">
    <property type="entry name" value="SARCOSINE DEHYDROGENASE-RELATED"/>
    <property type="match status" value="1"/>
</dbReference>
<dbReference type="PANTHER" id="PTHR13847:SF283">
    <property type="entry name" value="TRNA 5-METHYLAMINOMETHYL-2-THIOURIDINE BIOSYNTHESIS BIFUNCTIONAL PROTEIN MNMC"/>
    <property type="match status" value="1"/>
</dbReference>
<dbReference type="Pfam" id="PF01266">
    <property type="entry name" value="DAO"/>
    <property type="match status" value="1"/>
</dbReference>
<dbReference type="Pfam" id="PF05430">
    <property type="entry name" value="Methyltransf_30"/>
    <property type="match status" value="1"/>
</dbReference>
<dbReference type="SUPFAM" id="SSF51905">
    <property type="entry name" value="FAD/NAD(P)-binding domain"/>
    <property type="match status" value="1"/>
</dbReference>
<accession>Q1LM60</accession>
<reference key="1">
    <citation type="journal article" date="2010" name="PLoS ONE">
        <title>The complete genome sequence of Cupriavidus metallidurans strain CH34, a master survivalist in harsh and anthropogenic environments.</title>
        <authorList>
            <person name="Janssen P.J."/>
            <person name="Van Houdt R."/>
            <person name="Moors H."/>
            <person name="Monsieurs P."/>
            <person name="Morin N."/>
            <person name="Michaux A."/>
            <person name="Benotmane M.A."/>
            <person name="Leys N."/>
            <person name="Vallaeys T."/>
            <person name="Lapidus A."/>
            <person name="Monchy S."/>
            <person name="Medigue C."/>
            <person name="Taghavi S."/>
            <person name="McCorkle S."/>
            <person name="Dunn J."/>
            <person name="van der Lelie D."/>
            <person name="Mergeay M."/>
        </authorList>
    </citation>
    <scope>NUCLEOTIDE SEQUENCE [LARGE SCALE GENOMIC DNA]</scope>
    <source>
        <strain>ATCC 43123 / DSM 2839 / NBRC 102507 / CH34</strain>
    </source>
</reference>
<protein>
    <recommendedName>
        <fullName evidence="1">tRNA 5-methylaminomethyl-2-thiouridine biosynthesis bifunctional protein MnmC</fullName>
        <shortName evidence="1">tRNA mnm(5)s(2)U biosynthesis bifunctional protein</shortName>
    </recommendedName>
    <domain>
        <recommendedName>
            <fullName evidence="1">tRNA (mnm(5)s(2)U34)-methyltransferase</fullName>
            <ecNumber evidence="1">2.1.1.61</ecNumber>
        </recommendedName>
    </domain>
    <domain>
        <recommendedName>
            <fullName evidence="1">FAD-dependent cmnm(5)s(2)U34 oxidoreductase</fullName>
            <ecNumber evidence="1">1.5.-.-</ecNumber>
        </recommendedName>
    </domain>
</protein>
<organism>
    <name type="scientific">Cupriavidus metallidurans (strain ATCC 43123 / DSM 2839 / NBRC 102507 / CH34)</name>
    <name type="common">Ralstonia metallidurans</name>
    <dbReference type="NCBI Taxonomy" id="266264"/>
    <lineage>
        <taxon>Bacteria</taxon>
        <taxon>Pseudomonadati</taxon>
        <taxon>Pseudomonadota</taxon>
        <taxon>Betaproteobacteria</taxon>
        <taxon>Burkholderiales</taxon>
        <taxon>Burkholderiaceae</taxon>
        <taxon>Cupriavidus</taxon>
    </lineage>
</organism>
<proteinExistence type="inferred from homology"/>
<keyword id="KW-0963">Cytoplasm</keyword>
<keyword id="KW-0274">FAD</keyword>
<keyword id="KW-0285">Flavoprotein</keyword>
<keyword id="KW-0489">Methyltransferase</keyword>
<keyword id="KW-0511">Multifunctional enzyme</keyword>
<keyword id="KW-0560">Oxidoreductase</keyword>
<keyword id="KW-1185">Reference proteome</keyword>
<keyword id="KW-0949">S-adenosyl-L-methionine</keyword>
<keyword id="KW-0808">Transferase</keyword>
<keyword id="KW-0819">tRNA processing</keyword>
<evidence type="ECO:0000255" key="1">
    <source>
        <dbReference type="HAMAP-Rule" id="MF_01102"/>
    </source>
</evidence>
<comment type="function">
    <text evidence="1">Catalyzes the last two steps in the biosynthesis of 5-methylaminomethyl-2-thiouridine (mnm(5)s(2)U) at the wobble position (U34) in tRNA. Catalyzes the FAD-dependent demodification of cmnm(5)s(2)U34 to nm(5)s(2)U34, followed by the transfer of a methyl group from S-adenosyl-L-methionine to nm(5)s(2)U34, to form mnm(5)s(2)U34.</text>
</comment>
<comment type="catalytic activity">
    <reaction evidence="1">
        <text>5-aminomethyl-2-thiouridine(34) in tRNA + S-adenosyl-L-methionine = 5-methylaminomethyl-2-thiouridine(34) in tRNA + S-adenosyl-L-homocysteine + H(+)</text>
        <dbReference type="Rhea" id="RHEA:19569"/>
        <dbReference type="Rhea" id="RHEA-COMP:10195"/>
        <dbReference type="Rhea" id="RHEA-COMP:10197"/>
        <dbReference type="ChEBI" id="CHEBI:15378"/>
        <dbReference type="ChEBI" id="CHEBI:57856"/>
        <dbReference type="ChEBI" id="CHEBI:59789"/>
        <dbReference type="ChEBI" id="CHEBI:74454"/>
        <dbReference type="ChEBI" id="CHEBI:74455"/>
        <dbReference type="EC" id="2.1.1.61"/>
    </reaction>
</comment>
<comment type="cofactor">
    <cofactor evidence="1">
        <name>FAD</name>
        <dbReference type="ChEBI" id="CHEBI:57692"/>
    </cofactor>
</comment>
<comment type="subcellular location">
    <subcellularLocation>
        <location evidence="1">Cytoplasm</location>
    </subcellularLocation>
</comment>
<comment type="similarity">
    <text evidence="1">In the N-terminal section; belongs to the methyltransferase superfamily. tRNA (mnm(5)s(2)U34)-methyltransferase family.</text>
</comment>
<comment type="similarity">
    <text evidence="1">In the C-terminal section; belongs to the DAO family.</text>
</comment>
<feature type="chain" id="PRO_1000065010" description="tRNA 5-methylaminomethyl-2-thiouridine biosynthesis bifunctional protein MnmC">
    <location>
        <begin position="1"/>
        <end position="672"/>
    </location>
</feature>
<feature type="region of interest" description="tRNA (mnm(5)s(2)U34)-methyltransferase">
    <location>
        <begin position="1"/>
        <end position="235"/>
    </location>
</feature>
<feature type="region of interest" description="FAD-dependent cmnm(5)s(2)U34 oxidoreductase">
    <location>
        <begin position="259"/>
        <end position="672"/>
    </location>
</feature>